<keyword id="KW-0488">Methylation</keyword>
<keyword id="KW-1185">Reference proteome</keyword>
<keyword id="KW-0687">Ribonucleoprotein</keyword>
<keyword id="KW-0689">Ribosomal protein</keyword>
<keyword id="KW-0694">RNA-binding</keyword>
<keyword id="KW-0699">rRNA-binding</keyword>
<proteinExistence type="inferred from homology"/>
<evidence type="ECO:0000255" key="1">
    <source>
        <dbReference type="HAMAP-Rule" id="MF_00736"/>
    </source>
</evidence>
<evidence type="ECO:0000305" key="2"/>
<name>RL11_SYNE7</name>
<protein>
    <recommendedName>
        <fullName evidence="1">Large ribosomal subunit protein uL11</fullName>
    </recommendedName>
    <alternativeName>
        <fullName evidence="2">50S ribosomal protein L11</fullName>
    </alternativeName>
</protein>
<reference key="1">
    <citation type="submission" date="2005-08" db="EMBL/GenBank/DDBJ databases">
        <title>Complete sequence of chromosome 1 of Synechococcus elongatus PCC 7942.</title>
        <authorList>
            <consortium name="US DOE Joint Genome Institute"/>
            <person name="Copeland A."/>
            <person name="Lucas S."/>
            <person name="Lapidus A."/>
            <person name="Barry K."/>
            <person name="Detter J.C."/>
            <person name="Glavina T."/>
            <person name="Hammon N."/>
            <person name="Israni S."/>
            <person name="Pitluck S."/>
            <person name="Schmutz J."/>
            <person name="Larimer F."/>
            <person name="Land M."/>
            <person name="Kyrpides N."/>
            <person name="Lykidis A."/>
            <person name="Golden S."/>
            <person name="Richardson P."/>
        </authorList>
    </citation>
    <scope>NUCLEOTIDE SEQUENCE [LARGE SCALE GENOMIC DNA]</scope>
    <source>
        <strain>ATCC 33912 / PCC 7942 / FACHB-805</strain>
    </source>
</reference>
<gene>
    <name evidence="1" type="primary">rplK</name>
    <name evidence="1" type="synonym">rpl11</name>
    <name type="ordered locus">Synpcc7942_0634</name>
</gene>
<dbReference type="EMBL" id="CP000100">
    <property type="protein sequence ID" value="ABB56666.1"/>
    <property type="molecule type" value="Genomic_DNA"/>
</dbReference>
<dbReference type="RefSeq" id="WP_011377656.1">
    <property type="nucleotide sequence ID" value="NZ_JACJTX010000006.1"/>
</dbReference>
<dbReference type="SMR" id="Q31QK3"/>
<dbReference type="STRING" id="1140.Synpcc7942_0634"/>
<dbReference type="PaxDb" id="1140-Synpcc7942_0634"/>
<dbReference type="GeneID" id="72429467"/>
<dbReference type="KEGG" id="syf:Synpcc7942_0634"/>
<dbReference type="eggNOG" id="COG0080">
    <property type="taxonomic scope" value="Bacteria"/>
</dbReference>
<dbReference type="HOGENOM" id="CLU_074237_2_2_3"/>
<dbReference type="OrthoDB" id="9802408at2"/>
<dbReference type="BioCyc" id="SYNEL:SYNPCC7942_0634-MONOMER"/>
<dbReference type="Proteomes" id="UP000889800">
    <property type="component" value="Chromosome"/>
</dbReference>
<dbReference type="GO" id="GO:0022625">
    <property type="term" value="C:cytosolic large ribosomal subunit"/>
    <property type="evidence" value="ECO:0007669"/>
    <property type="project" value="TreeGrafter"/>
</dbReference>
<dbReference type="GO" id="GO:0070180">
    <property type="term" value="F:large ribosomal subunit rRNA binding"/>
    <property type="evidence" value="ECO:0007669"/>
    <property type="project" value="UniProtKB-UniRule"/>
</dbReference>
<dbReference type="GO" id="GO:0003735">
    <property type="term" value="F:structural constituent of ribosome"/>
    <property type="evidence" value="ECO:0007669"/>
    <property type="project" value="InterPro"/>
</dbReference>
<dbReference type="GO" id="GO:0006412">
    <property type="term" value="P:translation"/>
    <property type="evidence" value="ECO:0007669"/>
    <property type="project" value="UniProtKB-UniRule"/>
</dbReference>
<dbReference type="CDD" id="cd00349">
    <property type="entry name" value="Ribosomal_L11"/>
    <property type="match status" value="1"/>
</dbReference>
<dbReference type="FunFam" id="1.10.10.250:FF:000001">
    <property type="entry name" value="50S ribosomal protein L11"/>
    <property type="match status" value="1"/>
</dbReference>
<dbReference type="FunFam" id="3.30.1550.10:FF:000001">
    <property type="entry name" value="50S ribosomal protein L11"/>
    <property type="match status" value="1"/>
</dbReference>
<dbReference type="Gene3D" id="1.10.10.250">
    <property type="entry name" value="Ribosomal protein L11, C-terminal domain"/>
    <property type="match status" value="1"/>
</dbReference>
<dbReference type="Gene3D" id="3.30.1550.10">
    <property type="entry name" value="Ribosomal protein L11/L12, N-terminal domain"/>
    <property type="match status" value="1"/>
</dbReference>
<dbReference type="HAMAP" id="MF_00736">
    <property type="entry name" value="Ribosomal_uL11"/>
    <property type="match status" value="1"/>
</dbReference>
<dbReference type="InterPro" id="IPR000911">
    <property type="entry name" value="Ribosomal_uL11"/>
</dbReference>
<dbReference type="InterPro" id="IPR006519">
    <property type="entry name" value="Ribosomal_uL11_bac-typ"/>
</dbReference>
<dbReference type="InterPro" id="IPR020783">
    <property type="entry name" value="Ribosomal_uL11_C"/>
</dbReference>
<dbReference type="InterPro" id="IPR036769">
    <property type="entry name" value="Ribosomal_uL11_C_sf"/>
</dbReference>
<dbReference type="InterPro" id="IPR020785">
    <property type="entry name" value="Ribosomal_uL11_CS"/>
</dbReference>
<dbReference type="InterPro" id="IPR020784">
    <property type="entry name" value="Ribosomal_uL11_N"/>
</dbReference>
<dbReference type="InterPro" id="IPR036796">
    <property type="entry name" value="Ribosomal_uL11_N_sf"/>
</dbReference>
<dbReference type="NCBIfam" id="TIGR01632">
    <property type="entry name" value="L11_bact"/>
    <property type="match status" value="1"/>
</dbReference>
<dbReference type="PANTHER" id="PTHR11661">
    <property type="entry name" value="60S RIBOSOMAL PROTEIN L12"/>
    <property type="match status" value="1"/>
</dbReference>
<dbReference type="PANTHER" id="PTHR11661:SF1">
    <property type="entry name" value="LARGE RIBOSOMAL SUBUNIT PROTEIN UL11M"/>
    <property type="match status" value="1"/>
</dbReference>
<dbReference type="Pfam" id="PF00298">
    <property type="entry name" value="Ribosomal_L11"/>
    <property type="match status" value="1"/>
</dbReference>
<dbReference type="Pfam" id="PF03946">
    <property type="entry name" value="Ribosomal_L11_N"/>
    <property type="match status" value="1"/>
</dbReference>
<dbReference type="SMART" id="SM00649">
    <property type="entry name" value="RL11"/>
    <property type="match status" value="1"/>
</dbReference>
<dbReference type="SUPFAM" id="SSF54747">
    <property type="entry name" value="Ribosomal L11/L12e N-terminal domain"/>
    <property type="match status" value="1"/>
</dbReference>
<dbReference type="SUPFAM" id="SSF46906">
    <property type="entry name" value="Ribosomal protein L11, C-terminal domain"/>
    <property type="match status" value="1"/>
</dbReference>
<dbReference type="PROSITE" id="PS00359">
    <property type="entry name" value="RIBOSOMAL_L11"/>
    <property type="match status" value="1"/>
</dbReference>
<sequence length="141" mass="14903">MAKKVVALIKLALPAGKANPAPPVGPALGQHGVNIMAFCKEYNARTQDKVGLVIPVEISVFEDRSFTFILKTPPASVLIAKAAGIERGSGNPNKTKVGKITTAQLREIAETKLPDLNTKNVEAAMRIVEGTARNMGVTIAD</sequence>
<organism>
    <name type="scientific">Synechococcus elongatus (strain ATCC 33912 / PCC 7942 / FACHB-805)</name>
    <name type="common">Anacystis nidulans R2</name>
    <dbReference type="NCBI Taxonomy" id="1140"/>
    <lineage>
        <taxon>Bacteria</taxon>
        <taxon>Bacillati</taxon>
        <taxon>Cyanobacteriota</taxon>
        <taxon>Cyanophyceae</taxon>
        <taxon>Synechococcales</taxon>
        <taxon>Synechococcaceae</taxon>
        <taxon>Synechococcus</taxon>
    </lineage>
</organism>
<feature type="chain" id="PRO_0000258232" description="Large ribosomal subunit protein uL11">
    <location>
        <begin position="1"/>
        <end position="141"/>
    </location>
</feature>
<accession>Q31QK3</accession>
<comment type="function">
    <text evidence="1">Forms part of the ribosomal stalk which helps the ribosome interact with GTP-bound translation factors.</text>
</comment>
<comment type="subunit">
    <text evidence="1">Part of the ribosomal stalk of the 50S ribosomal subunit. Interacts with L10 and the large rRNA to form the base of the stalk. L10 forms an elongated spine to which L12 dimers bind in a sequential fashion forming a multimeric L10(L12)X complex.</text>
</comment>
<comment type="PTM">
    <text evidence="1">One or more lysine residues are methylated.</text>
</comment>
<comment type="similarity">
    <text evidence="1">Belongs to the universal ribosomal protein uL11 family.</text>
</comment>